<proteinExistence type="evidence at protein level"/>
<accession>P80738</accession>
<dbReference type="SMR" id="P80738"/>
<dbReference type="GO" id="GO:0000786">
    <property type="term" value="C:nucleosome"/>
    <property type="evidence" value="ECO:0007669"/>
    <property type="project" value="UniProtKB-KW"/>
</dbReference>
<dbReference type="GO" id="GO:0005634">
    <property type="term" value="C:nucleus"/>
    <property type="evidence" value="ECO:0007669"/>
    <property type="project" value="UniProtKB-SubCell"/>
</dbReference>
<dbReference type="GO" id="GO:0003677">
    <property type="term" value="F:DNA binding"/>
    <property type="evidence" value="ECO:0007669"/>
    <property type="project" value="UniProtKB-KW"/>
</dbReference>
<dbReference type="GO" id="GO:0046982">
    <property type="term" value="F:protein heterodimerization activity"/>
    <property type="evidence" value="ECO:0007669"/>
    <property type="project" value="InterPro"/>
</dbReference>
<dbReference type="GO" id="GO:0030527">
    <property type="term" value="F:structural constituent of chromatin"/>
    <property type="evidence" value="ECO:0007669"/>
    <property type="project" value="InterPro"/>
</dbReference>
<dbReference type="Gene3D" id="1.10.20.10">
    <property type="entry name" value="Histone, subunit A"/>
    <property type="match status" value="1"/>
</dbReference>
<dbReference type="InterPro" id="IPR009072">
    <property type="entry name" value="Histone-fold"/>
</dbReference>
<dbReference type="InterPro" id="IPR001951">
    <property type="entry name" value="Histone_H4"/>
</dbReference>
<dbReference type="PANTHER" id="PTHR10484">
    <property type="entry name" value="HISTONE H4"/>
    <property type="match status" value="1"/>
</dbReference>
<dbReference type="PRINTS" id="PR00623">
    <property type="entry name" value="HISTONEH4"/>
</dbReference>
<dbReference type="SUPFAM" id="SSF47113">
    <property type="entry name" value="Histone-fold"/>
    <property type="match status" value="1"/>
</dbReference>
<sequence>MGGKGGKGGKGLGKVGAKKRHSRRVIRENIQGITKPAIRRLARRGGVK</sequence>
<comment type="function">
    <text>Core component of nucleosome. Nucleosomes wrap and compact DNA into chromatin, limiting DNA accessibility to the cellular machineries which require DNA as a template. Histones thereby play a central role in transcription regulation, DNA repair, DNA replication and chromosomal stability. DNA accessibility is regulated via a complex set of post-translational modifications of histones, also called histone code, and nucleosome remodeling.</text>
</comment>
<comment type="subunit">
    <text>The nucleosome is a histone octamer containing two molecules each of H2A, H2B, H3 and H4 assembled in one H3-H4 heterotetramer and two H2A-H2B heterodimers. The octamer wraps approximately 147 bp of DNA.</text>
</comment>
<comment type="subcellular location">
    <subcellularLocation>
        <location evidence="1">Nucleus</location>
    </subcellularLocation>
    <subcellularLocation>
        <location evidence="1">Chromosome</location>
    </subcellularLocation>
</comment>
<comment type="similarity">
    <text evidence="4">Belongs to the histone H4 family.</text>
</comment>
<protein>
    <recommendedName>
        <fullName>Histone H4</fullName>
    </recommendedName>
</protein>
<keyword id="KW-0158">Chromosome</keyword>
<keyword id="KW-0903">Direct protein sequencing</keyword>
<keyword id="KW-0238">DNA-binding</keyword>
<keyword id="KW-0544">Nucleosome core</keyword>
<keyword id="KW-0539">Nucleus</keyword>
<name>H4Y_BLEJA</name>
<evidence type="ECO:0000250" key="1"/>
<evidence type="ECO:0000256" key="2">
    <source>
        <dbReference type="SAM" id="MobiDB-lite"/>
    </source>
</evidence>
<evidence type="ECO:0000269" key="3">
    <source>
    </source>
</evidence>
<evidence type="ECO:0000305" key="4"/>
<organism>
    <name type="scientific">Blepharisma japonicum</name>
    <dbReference type="NCBI Taxonomy" id="5961"/>
    <lineage>
        <taxon>Eukaryota</taxon>
        <taxon>Sar</taxon>
        <taxon>Alveolata</taxon>
        <taxon>Ciliophora</taxon>
        <taxon>Postciliodesmatophora</taxon>
        <taxon>Heterotrichea</taxon>
        <taxon>Heterotrichida</taxon>
        <taxon>Blepharismidae</taxon>
        <taxon>Blepharisma</taxon>
    </lineage>
</organism>
<feature type="initiator methionine" description="Removed" evidence="3">
    <location>
        <position position="1"/>
    </location>
</feature>
<feature type="chain" id="PRO_0000158288" description="Histone H4">
    <location>
        <begin position="2"/>
        <end position="48" status="greater than"/>
    </location>
</feature>
<feature type="region of interest" description="Disordered" evidence="2">
    <location>
        <begin position="1"/>
        <end position="23"/>
    </location>
</feature>
<feature type="compositionally biased region" description="Gly residues" evidence="2">
    <location>
        <begin position="1"/>
        <end position="14"/>
    </location>
</feature>
<feature type="non-terminal residue">
    <location>
        <position position="48"/>
    </location>
</feature>
<reference key="1">
    <citation type="journal article" date="1997" name="FEMS Microbiol. Lett.">
        <title>H4 histone in the macronucleus of Blepharisma japonicum (Protozoa, Ciliophora, Heterotrichida).</title>
        <authorList>
            <person name="Salvini M."/>
            <person name="Bini E."/>
            <person name="Santucci A."/>
            <person name="Batistoni R."/>
        </authorList>
    </citation>
    <scope>PROTEIN SEQUENCE OF 2-48</scope>
    <source>
        <strain>A5-3</strain>
    </source>
</reference>